<comment type="function">
    <text evidence="1">Folding helper with both chaperone and peptidyl-prolyl cis-trans isomerase (PPIase) activities. Chaperone activity prevents aggregation of unfolded or partially folded proteins and promotes their correct folding. PPIases catalyze the cis-trans isomerization of Xaa-Pro bonds of peptides, which accelerates slow steps of protein folding and thus shortens the lifetime of intermediates. Both strategies lower the concentration of intermediates and increase the productivity and yield of the folding reaction. SlyD could be involved in Tat-dependent translocation, by binding to the Tat-type signal of folded proteins (By similarity).</text>
</comment>
<comment type="function">
    <text evidence="1">Also involved in hydrogenase metallocenter assembly, probably by participating in the nickel insertion step. This function in hydrogenase biosynthesis requires chaperone activity and the presence of the metal-binding domain, but not PPIase activity (By similarity).</text>
</comment>
<comment type="catalytic activity">
    <reaction>
        <text>[protein]-peptidylproline (omega=180) = [protein]-peptidylproline (omega=0)</text>
        <dbReference type="Rhea" id="RHEA:16237"/>
        <dbReference type="Rhea" id="RHEA-COMP:10747"/>
        <dbReference type="Rhea" id="RHEA-COMP:10748"/>
        <dbReference type="ChEBI" id="CHEBI:83833"/>
        <dbReference type="ChEBI" id="CHEBI:83834"/>
        <dbReference type="EC" id="5.2.1.8"/>
    </reaction>
</comment>
<comment type="subunit">
    <text evidence="1">Monomer. Binds to a broad range of unrelated Tat signal sequences. Interacts with the hydrogenase nickel incorporation protein HypB (By similarity).</text>
</comment>
<comment type="subcellular location">
    <subcellularLocation>
        <location evidence="1">Cytoplasm</location>
    </subcellularLocation>
</comment>
<comment type="domain">
    <text evidence="1">The N-terminal region consists of two globular folded domains that contain prolyl isomerase and chaperone activities.</text>
</comment>
<comment type="domain">
    <text evidence="1">The C-terminal region binds nickel ions.</text>
</comment>
<comment type="similarity">
    <text evidence="4">Belongs to the FKBP-type PPIase family.</text>
</comment>
<keyword id="KW-0143">Chaperone</keyword>
<keyword id="KW-0963">Cytoplasm</keyword>
<keyword id="KW-0413">Isomerase</keyword>
<keyword id="KW-0479">Metal-binding</keyword>
<keyword id="KW-0533">Nickel</keyword>
<keyword id="KW-1185">Reference proteome</keyword>
<keyword id="KW-0697">Rotamase</keyword>
<sequence>MKVAKDLVVSLAYQVRTEDGVLVDESPVSAPLDYLHGHGSLISGLETALEGHEVGDKFDVAVGANDAYGQYDENLVQRVPKDVFMGVDELQVGMRFLAETDQGPVPVEITAVEDDHVVVDGNHMLAGQNLKFNVEVVAIREATEEELAHGHVHGAHDHHHDHDHDGCCGGHGHDHGHEHGGEGCCGGKGNGGCGCH</sequence>
<reference key="1">
    <citation type="journal article" date="2002" name="Nucleic Acids Res.">
        <title>Genome sequence of Shigella flexneri 2a: insights into pathogenicity through comparison with genomes of Escherichia coli K12 and O157.</title>
        <authorList>
            <person name="Jin Q."/>
            <person name="Yuan Z."/>
            <person name="Xu J."/>
            <person name="Wang Y."/>
            <person name="Shen Y."/>
            <person name="Lu W."/>
            <person name="Wang J."/>
            <person name="Liu H."/>
            <person name="Yang J."/>
            <person name="Yang F."/>
            <person name="Zhang X."/>
            <person name="Zhang J."/>
            <person name="Yang G."/>
            <person name="Wu H."/>
            <person name="Qu D."/>
            <person name="Dong J."/>
            <person name="Sun L."/>
            <person name="Xue Y."/>
            <person name="Zhao A."/>
            <person name="Gao Y."/>
            <person name="Zhu J."/>
            <person name="Kan B."/>
            <person name="Ding K."/>
            <person name="Chen S."/>
            <person name="Cheng H."/>
            <person name="Yao Z."/>
            <person name="He B."/>
            <person name="Chen R."/>
            <person name="Ma D."/>
            <person name="Qiang B."/>
            <person name="Wen Y."/>
            <person name="Hou Y."/>
            <person name="Yu J."/>
        </authorList>
    </citation>
    <scope>NUCLEOTIDE SEQUENCE [LARGE SCALE GENOMIC DNA]</scope>
    <source>
        <strain>301 / Serotype 2a</strain>
    </source>
</reference>
<reference key="2">
    <citation type="journal article" date="2003" name="Infect. Immun.">
        <title>Complete genome sequence and comparative genomics of Shigella flexneri serotype 2a strain 2457T.</title>
        <authorList>
            <person name="Wei J."/>
            <person name="Goldberg M.B."/>
            <person name="Burland V."/>
            <person name="Venkatesan M.M."/>
            <person name="Deng W."/>
            <person name="Fournier G."/>
            <person name="Mayhew G.F."/>
            <person name="Plunkett G. III"/>
            <person name="Rose D.J."/>
            <person name="Darling A."/>
            <person name="Mau B."/>
            <person name="Perna N.T."/>
            <person name="Payne S.M."/>
            <person name="Runyen-Janecky L.J."/>
            <person name="Zhou S."/>
            <person name="Schwartz D.C."/>
            <person name="Blattner F.R."/>
        </authorList>
    </citation>
    <scope>NUCLEOTIDE SEQUENCE [LARGE SCALE GENOMIC DNA]</scope>
    <source>
        <strain>ATCC 700930 / 2457T / Serotype 2a</strain>
    </source>
</reference>
<organism>
    <name type="scientific">Shigella flexneri</name>
    <dbReference type="NCBI Taxonomy" id="623"/>
    <lineage>
        <taxon>Bacteria</taxon>
        <taxon>Pseudomonadati</taxon>
        <taxon>Pseudomonadota</taxon>
        <taxon>Gammaproteobacteria</taxon>
        <taxon>Enterobacterales</taxon>
        <taxon>Enterobacteriaceae</taxon>
        <taxon>Shigella</taxon>
    </lineage>
</organism>
<dbReference type="EC" id="5.2.1.8"/>
<dbReference type="EMBL" id="AE005674">
    <property type="protein sequence ID" value="AAN44830.1"/>
    <property type="molecule type" value="Genomic_DNA"/>
</dbReference>
<dbReference type="EMBL" id="AE014073">
    <property type="protein sequence ID" value="AAP19347.1"/>
    <property type="molecule type" value="Genomic_DNA"/>
</dbReference>
<dbReference type="RefSeq" id="NP_709123.1">
    <property type="nucleotide sequence ID" value="NC_004337.2"/>
</dbReference>
<dbReference type="RefSeq" id="WP_000861334.1">
    <property type="nucleotide sequence ID" value="NZ_WPGW01000003.1"/>
</dbReference>
<dbReference type="BMRB" id="P0A9L2"/>
<dbReference type="SMR" id="P0A9L2"/>
<dbReference type="STRING" id="198214.SF3367"/>
<dbReference type="PaxDb" id="198214-SF3367"/>
<dbReference type="GeneID" id="1025309"/>
<dbReference type="GeneID" id="93778649"/>
<dbReference type="KEGG" id="sfl:SF3367"/>
<dbReference type="KEGG" id="sfx:S4395"/>
<dbReference type="PATRIC" id="fig|198214.7.peg.3977"/>
<dbReference type="HOGENOM" id="CLU_098197_1_0_6"/>
<dbReference type="Proteomes" id="UP000001006">
    <property type="component" value="Chromosome"/>
</dbReference>
<dbReference type="Proteomes" id="UP000002673">
    <property type="component" value="Chromosome"/>
</dbReference>
<dbReference type="GO" id="GO:0005737">
    <property type="term" value="C:cytoplasm"/>
    <property type="evidence" value="ECO:0007669"/>
    <property type="project" value="UniProtKB-SubCell"/>
</dbReference>
<dbReference type="GO" id="GO:0046872">
    <property type="term" value="F:metal ion binding"/>
    <property type="evidence" value="ECO:0007669"/>
    <property type="project" value="UniProtKB-KW"/>
</dbReference>
<dbReference type="GO" id="GO:0003755">
    <property type="term" value="F:peptidyl-prolyl cis-trans isomerase activity"/>
    <property type="evidence" value="ECO:0007669"/>
    <property type="project" value="UniProtKB-KW"/>
</dbReference>
<dbReference type="GO" id="GO:0042026">
    <property type="term" value="P:protein refolding"/>
    <property type="evidence" value="ECO:0007669"/>
    <property type="project" value="UniProtKB-ARBA"/>
</dbReference>
<dbReference type="FunFam" id="2.40.10.330:FF:000001">
    <property type="entry name" value="Peptidyl-prolyl cis-trans isomerase"/>
    <property type="match status" value="1"/>
</dbReference>
<dbReference type="Gene3D" id="2.40.10.330">
    <property type="match status" value="1"/>
</dbReference>
<dbReference type="Gene3D" id="3.10.50.40">
    <property type="match status" value="1"/>
</dbReference>
<dbReference type="InterPro" id="IPR046357">
    <property type="entry name" value="PPIase_dom_sf"/>
</dbReference>
<dbReference type="InterPro" id="IPR001179">
    <property type="entry name" value="PPIase_FKBP_dom"/>
</dbReference>
<dbReference type="InterPro" id="IPR048261">
    <property type="entry name" value="SlpA/SlyD-like_ins_sf"/>
</dbReference>
<dbReference type="NCBIfam" id="NF008008">
    <property type="entry name" value="PRK10737.1"/>
    <property type="match status" value="1"/>
</dbReference>
<dbReference type="PANTHER" id="PTHR47861">
    <property type="entry name" value="FKBP-TYPE PEPTIDYL-PROLYL CIS-TRANS ISOMERASE SLYD"/>
    <property type="match status" value="1"/>
</dbReference>
<dbReference type="PANTHER" id="PTHR47861:SF3">
    <property type="entry name" value="FKBP-TYPE PEPTIDYL-PROLYL CIS-TRANS ISOMERASE SLYD"/>
    <property type="match status" value="1"/>
</dbReference>
<dbReference type="Pfam" id="PF00254">
    <property type="entry name" value="FKBP_C"/>
    <property type="match status" value="1"/>
</dbReference>
<dbReference type="SUPFAM" id="SSF54534">
    <property type="entry name" value="FKBP-like"/>
    <property type="match status" value="1"/>
</dbReference>
<dbReference type="PROSITE" id="PS50059">
    <property type="entry name" value="FKBP_PPIASE"/>
    <property type="match status" value="1"/>
</dbReference>
<feature type="chain" id="PRO_0000075361" description="FKBP-type peptidyl-prolyl cis-trans isomerase SlyD">
    <location>
        <begin position="1"/>
        <end position="196"/>
    </location>
</feature>
<feature type="domain" description="PPIase FKBP-type" evidence="3">
    <location>
        <begin position="1"/>
        <end position="95"/>
    </location>
</feature>
<feature type="region of interest" description="PPIase first part" evidence="1">
    <location>
        <begin position="1"/>
        <end position="69"/>
    </location>
</feature>
<feature type="region of interest" description="IF-chaperone" evidence="1">
    <location>
        <begin position="76"/>
        <end position="120"/>
    </location>
</feature>
<feature type="region of interest" description="PPIase second part" evidence="1">
    <location>
        <begin position="129"/>
        <end position="151"/>
    </location>
</feature>
<feature type="binding site" evidence="2">
    <location>
        <position position="167"/>
    </location>
    <ligand>
        <name>Ni(2+)</name>
        <dbReference type="ChEBI" id="CHEBI:49786"/>
    </ligand>
</feature>
<feature type="binding site" evidence="2">
    <location>
        <position position="168"/>
    </location>
    <ligand>
        <name>Ni(2+)</name>
        <dbReference type="ChEBI" id="CHEBI:49786"/>
    </ligand>
</feature>
<feature type="binding site" evidence="2">
    <location>
        <position position="184"/>
    </location>
    <ligand>
        <name>Ni(2+)</name>
        <dbReference type="ChEBI" id="CHEBI:49786"/>
    </ligand>
</feature>
<feature type="binding site" evidence="2">
    <location>
        <position position="185"/>
    </location>
    <ligand>
        <name>Ni(2+)</name>
        <dbReference type="ChEBI" id="CHEBI:49786"/>
    </ligand>
</feature>
<feature type="binding site" evidence="2">
    <location>
        <position position="193"/>
    </location>
    <ligand>
        <name>Ni(2+)</name>
        <dbReference type="ChEBI" id="CHEBI:49786"/>
    </ligand>
</feature>
<feature type="binding site" evidence="2">
    <location>
        <position position="195"/>
    </location>
    <ligand>
        <name>Ni(2+)</name>
        <dbReference type="ChEBI" id="CHEBI:49786"/>
    </ligand>
</feature>
<accession>P0A9L2</accession>
<accession>P30856</accession>
<evidence type="ECO:0000250" key="1"/>
<evidence type="ECO:0000255" key="2"/>
<evidence type="ECO:0000255" key="3">
    <source>
        <dbReference type="PROSITE-ProRule" id="PRU00277"/>
    </source>
</evidence>
<evidence type="ECO:0000305" key="4"/>
<gene>
    <name type="primary">slyD</name>
    <name type="ordered locus">SF3367</name>
    <name type="ordered locus">S4395</name>
</gene>
<protein>
    <recommendedName>
        <fullName>FKBP-type peptidyl-prolyl cis-trans isomerase SlyD</fullName>
        <shortName>PPIase</shortName>
        <ecNumber>5.2.1.8</ecNumber>
    </recommendedName>
    <alternativeName>
        <fullName>Metallochaperone SlyD</fullName>
    </alternativeName>
</protein>
<name>SLYD_SHIFL</name>
<proteinExistence type="inferred from homology"/>